<accession>P10117</accession>
<sequence>NLIQFSQLIQCANKGKRPTLHYMDYGCYCGPGGSGTPVDDLDRCCKTNDDCYGQAEKKGCSPLSTNYNFDCFPGGPQCGKGTTCQRFVCDCDLKAALCFAKSPYNNKNFNIDTKKRCK</sequence>
<dbReference type="PIR" id="S01141">
    <property type="entry name" value="S01141"/>
</dbReference>
<dbReference type="SMR" id="P10117"/>
<dbReference type="GO" id="GO:0005576">
    <property type="term" value="C:extracellular region"/>
    <property type="evidence" value="ECO:0007669"/>
    <property type="project" value="UniProtKB-SubCell"/>
</dbReference>
<dbReference type="GO" id="GO:0005509">
    <property type="term" value="F:calcium ion binding"/>
    <property type="evidence" value="ECO:0007669"/>
    <property type="project" value="InterPro"/>
</dbReference>
<dbReference type="GO" id="GO:0047498">
    <property type="term" value="F:calcium-dependent phospholipase A2 activity"/>
    <property type="evidence" value="ECO:0007669"/>
    <property type="project" value="TreeGrafter"/>
</dbReference>
<dbReference type="GO" id="GO:0005543">
    <property type="term" value="F:phospholipid binding"/>
    <property type="evidence" value="ECO:0007669"/>
    <property type="project" value="TreeGrafter"/>
</dbReference>
<dbReference type="GO" id="GO:0050482">
    <property type="term" value="P:arachidonate secretion"/>
    <property type="evidence" value="ECO:0007669"/>
    <property type="project" value="InterPro"/>
</dbReference>
<dbReference type="GO" id="GO:0016042">
    <property type="term" value="P:lipid catabolic process"/>
    <property type="evidence" value="ECO:0007669"/>
    <property type="project" value="InterPro"/>
</dbReference>
<dbReference type="GO" id="GO:0006644">
    <property type="term" value="P:phospholipid metabolic process"/>
    <property type="evidence" value="ECO:0007669"/>
    <property type="project" value="InterPro"/>
</dbReference>
<dbReference type="CDD" id="cd00125">
    <property type="entry name" value="PLA2c"/>
    <property type="match status" value="1"/>
</dbReference>
<dbReference type="FunFam" id="1.20.90.10:FF:000007">
    <property type="entry name" value="Acidic phospholipase A2"/>
    <property type="match status" value="1"/>
</dbReference>
<dbReference type="Gene3D" id="1.20.90.10">
    <property type="entry name" value="Phospholipase A2 domain"/>
    <property type="match status" value="1"/>
</dbReference>
<dbReference type="InterPro" id="IPR001211">
    <property type="entry name" value="PLipase_A2"/>
</dbReference>
<dbReference type="InterPro" id="IPR033112">
    <property type="entry name" value="PLipase_A2_Asp_AS"/>
</dbReference>
<dbReference type="InterPro" id="IPR016090">
    <property type="entry name" value="PLipase_A2_dom"/>
</dbReference>
<dbReference type="InterPro" id="IPR036444">
    <property type="entry name" value="PLipase_A2_dom_sf"/>
</dbReference>
<dbReference type="PANTHER" id="PTHR11716:SF100">
    <property type="entry name" value="PHOSPHOLIPASE A2"/>
    <property type="match status" value="1"/>
</dbReference>
<dbReference type="PANTHER" id="PTHR11716">
    <property type="entry name" value="PHOSPHOLIPASE A2 FAMILY MEMBER"/>
    <property type="match status" value="1"/>
</dbReference>
<dbReference type="Pfam" id="PF00068">
    <property type="entry name" value="Phospholip_A2_1"/>
    <property type="match status" value="1"/>
</dbReference>
<dbReference type="PRINTS" id="PR00389">
    <property type="entry name" value="PHPHLIPASEA2"/>
</dbReference>
<dbReference type="SMART" id="SM00085">
    <property type="entry name" value="PA2c"/>
    <property type="match status" value="1"/>
</dbReference>
<dbReference type="SUPFAM" id="SSF48619">
    <property type="entry name" value="Phospholipase A2, PLA2"/>
    <property type="match status" value="1"/>
</dbReference>
<dbReference type="PROSITE" id="PS00119">
    <property type="entry name" value="PA2_ASP"/>
    <property type="match status" value="1"/>
</dbReference>
<keyword id="KW-0903">Direct protein sequencing</keyword>
<keyword id="KW-1015">Disulfide bond</keyword>
<keyword id="KW-0964">Secreted</keyword>
<proteinExistence type="evidence at protein level"/>
<reference key="1">
    <citation type="journal article" date="1988" name="Biochem. J.">
        <title>Isolation, properties and amino acid sequences of a phospholipase A2 and its homologue without activity from the venom of a sea snake, Laticauda colubrina, from the Solomon Islands.</title>
        <authorList>
            <person name="Takasaki C."/>
            <person name="Kimura S."/>
            <person name="Kokubun Y."/>
            <person name="Tamiya N."/>
        </authorList>
    </citation>
    <scope>PROTEIN SEQUENCE</scope>
    <scope>SUBCELLULAR LOCATION</scope>
    <source>
        <tissue>Venom</tissue>
    </source>
</reference>
<evidence type="ECO:0000250" key="1"/>
<evidence type="ECO:0000250" key="2">
    <source>
        <dbReference type="UniProtKB" id="P24605"/>
    </source>
</evidence>
<evidence type="ECO:0000269" key="3">
    <source>
    </source>
</evidence>
<evidence type="ECO:0000305" key="4"/>
<evidence type="ECO:0000305" key="5">
    <source>
    </source>
</evidence>
<comment type="subcellular location">
    <subcellularLocation>
        <location evidence="3">Secreted</location>
    </subcellularLocation>
</comment>
<comment type="tissue specificity">
    <text evidence="5">Expressed by the venom gland.</text>
</comment>
<comment type="similarity">
    <text evidence="4">Belongs to the phospholipase A2 family. Group I subfamily. D49 sub-subfamily.</text>
</comment>
<comment type="caution">
    <text evidence="4">In contrast to other phospholipases, it lacks the typical Asp active site (Asp-&gt;Asn in position 75).</text>
</comment>
<organism>
    <name type="scientific">Laticauda colubrina</name>
    <name type="common">Yellow-lipped sea krait</name>
    <name type="synonym">Banded sea krait</name>
    <dbReference type="NCBI Taxonomy" id="8628"/>
    <lineage>
        <taxon>Eukaryota</taxon>
        <taxon>Metazoa</taxon>
        <taxon>Chordata</taxon>
        <taxon>Craniata</taxon>
        <taxon>Vertebrata</taxon>
        <taxon>Euteleostomi</taxon>
        <taxon>Lepidosauria</taxon>
        <taxon>Squamata</taxon>
        <taxon>Bifurcata</taxon>
        <taxon>Unidentata</taxon>
        <taxon>Episquamata</taxon>
        <taxon>Toxicofera</taxon>
        <taxon>Serpentes</taxon>
        <taxon>Colubroidea</taxon>
        <taxon>Elapidae</taxon>
        <taxon>Laticaudinae</taxon>
        <taxon>Laticauda</taxon>
    </lineage>
</organism>
<feature type="chain" id="PRO_0000161652" description="Basic phospholipase A2 homolog 1" evidence="3">
    <location>
        <begin position="1"/>
        <end position="118"/>
    </location>
</feature>
<feature type="region of interest" description="Important for membrane-damaging activities in eukaryotes and bacteria; heparin-binding" evidence="2">
    <location>
        <begin position="106"/>
        <end position="118"/>
    </location>
</feature>
<feature type="disulfide bond" evidence="1">
    <location>
        <begin position="11"/>
        <end position="71"/>
    </location>
</feature>
<feature type="disulfide bond" evidence="2">
    <location>
        <begin position="27"/>
        <end position="117"/>
    </location>
</feature>
<feature type="disulfide bond" evidence="2">
    <location>
        <begin position="29"/>
        <end position="45"/>
    </location>
</feature>
<feature type="disulfide bond" evidence="2">
    <location>
        <begin position="44"/>
        <end position="98"/>
    </location>
</feature>
<feature type="disulfide bond" evidence="2">
    <location>
        <begin position="51"/>
        <end position="91"/>
    </location>
</feature>
<feature type="disulfide bond" evidence="2">
    <location>
        <begin position="60"/>
        <end position="84"/>
    </location>
</feature>
<feature type="disulfide bond" evidence="2">
    <location>
        <begin position="78"/>
        <end position="89"/>
    </location>
</feature>
<name>PA2H1_LATCO</name>
<protein>
    <recommendedName>
        <fullName>Basic phospholipase A2 homolog 1</fullName>
        <shortName>svPLA2 homolog</shortName>
    </recommendedName>
    <alternativeName>
        <fullName>Phospholipase A2 homolog I</fullName>
        <shortName>PLH-I</shortName>
    </alternativeName>
</protein>